<organismHost>
    <name type="scientific">Acidianus hospitalis</name>
    <dbReference type="NCBI Taxonomy" id="563177"/>
</organismHost>
<organismHost>
    <name type="scientific">Acidianus infernus</name>
    <dbReference type="NCBI Taxonomy" id="12915"/>
</organismHost>
<keyword id="KW-1185">Reference proteome</keyword>
<gene>
    <name type="ORF">ORF274</name>
</gene>
<name>Y274_AFV1Y</name>
<accession>Q70LB9</accession>
<proteinExistence type="predicted"/>
<organism>
    <name type="scientific">Acidianus filamentous virus 1 (isolate United States/Yellowstone)</name>
    <name type="common">AFV-1</name>
    <dbReference type="NCBI Taxonomy" id="654909"/>
    <lineage>
        <taxon>Viruses</taxon>
        <taxon>Adnaviria</taxon>
        <taxon>Zilligvirae</taxon>
        <taxon>Taleaviricota</taxon>
        <taxon>Tokiviricetes</taxon>
        <taxon>Ligamenvirales</taxon>
        <taxon>Ungulaviridae</taxon>
        <taxon>Captovirus</taxon>
        <taxon>Acidianus filamentous virus 1</taxon>
    </lineage>
</organism>
<reference key="1">
    <citation type="journal article" date="2003" name="Virology">
        <title>AFV1, a novel virus infecting hyperthermophilic archaea of the genus acidianus.</title>
        <authorList>
            <person name="Bettstetter M."/>
            <person name="Peng X."/>
            <person name="Garrett R.A."/>
            <person name="Prangishvili D."/>
        </authorList>
    </citation>
    <scope>NUCLEOTIDE SEQUENCE [GENOMIC DNA]</scope>
</reference>
<sequence length="274" mass="29811">MPLNLKYFVPEQRYIILKTKGGGLVSTDREDLEMRVRDVLIKYLGKNVYDSDPRARQIIDTLSRNYRDVESWIRDSEFVMRSRAILKYYPHGDPYEEVKVIKTHNEATCFPIATLAYFIVTANCPTGCCGCGCHAGCNGSVGHAPYLMVGSDTSTLTYCLMPNLAQGYTQSPSATSYYWATGVLGSSPGSGGQVYAVVTSTWNAGVLPSGTIGEVGAFQFMINQLANSVDYGTGVPNQGYVMYARVSSASGAFSPISYTNTAPFTASITLYMAV</sequence>
<feature type="chain" id="PRO_0000384569" description="Uncharacterized protein ORF274">
    <location>
        <begin position="1"/>
        <end position="274"/>
    </location>
</feature>
<dbReference type="EMBL" id="AJ567472">
    <property type="protein sequence ID" value="CAD98961.1"/>
    <property type="molecule type" value="Genomic_DNA"/>
</dbReference>
<dbReference type="RefSeq" id="YP_003757.1">
    <property type="nucleotide sequence ID" value="NC_005830.1"/>
</dbReference>
<dbReference type="SMR" id="Q70LB9"/>
<dbReference type="KEGG" id="vg:2769179"/>
<dbReference type="Proteomes" id="UP000000514">
    <property type="component" value="Genome"/>
</dbReference>
<protein>
    <recommendedName>
        <fullName>Uncharacterized protein ORF274</fullName>
    </recommendedName>
</protein>